<dbReference type="EMBL" id="AE015929">
    <property type="protein sequence ID" value="AAO05050.1"/>
    <property type="molecule type" value="Genomic_DNA"/>
</dbReference>
<dbReference type="RefSeq" id="NP_765006.1">
    <property type="nucleotide sequence ID" value="NC_004461.1"/>
</dbReference>
<dbReference type="SMR" id="Q8CS29"/>
<dbReference type="KEGG" id="sep:SE_1451"/>
<dbReference type="PATRIC" id="fig|176280.10.peg.1416"/>
<dbReference type="eggNOG" id="COG0239">
    <property type="taxonomic scope" value="Bacteria"/>
</dbReference>
<dbReference type="HOGENOM" id="CLU_114342_3_2_9"/>
<dbReference type="OrthoDB" id="9799631at2"/>
<dbReference type="Proteomes" id="UP000001411">
    <property type="component" value="Chromosome"/>
</dbReference>
<dbReference type="GO" id="GO:0005886">
    <property type="term" value="C:plasma membrane"/>
    <property type="evidence" value="ECO:0007669"/>
    <property type="project" value="UniProtKB-SubCell"/>
</dbReference>
<dbReference type="GO" id="GO:0062054">
    <property type="term" value="F:fluoride channel activity"/>
    <property type="evidence" value="ECO:0007669"/>
    <property type="project" value="UniProtKB-UniRule"/>
</dbReference>
<dbReference type="GO" id="GO:0046872">
    <property type="term" value="F:metal ion binding"/>
    <property type="evidence" value="ECO:0007669"/>
    <property type="project" value="UniProtKB-KW"/>
</dbReference>
<dbReference type="GO" id="GO:0140114">
    <property type="term" value="P:cellular detoxification of fluoride"/>
    <property type="evidence" value="ECO:0007669"/>
    <property type="project" value="UniProtKB-UniRule"/>
</dbReference>
<dbReference type="HAMAP" id="MF_00454">
    <property type="entry name" value="FluC"/>
    <property type="match status" value="1"/>
</dbReference>
<dbReference type="InterPro" id="IPR003691">
    <property type="entry name" value="FluC"/>
</dbReference>
<dbReference type="NCBIfam" id="NF010797">
    <property type="entry name" value="PRK14201.1"/>
    <property type="match status" value="1"/>
</dbReference>
<dbReference type="PANTHER" id="PTHR28259">
    <property type="entry name" value="FLUORIDE EXPORT PROTEIN 1-RELATED"/>
    <property type="match status" value="1"/>
</dbReference>
<dbReference type="PANTHER" id="PTHR28259:SF16">
    <property type="entry name" value="FLUORIDE-SPECIFIC ION CHANNEL FLUC 2"/>
    <property type="match status" value="1"/>
</dbReference>
<dbReference type="Pfam" id="PF02537">
    <property type="entry name" value="CRCB"/>
    <property type="match status" value="1"/>
</dbReference>
<accession>Q8CS29</accession>
<organism>
    <name type="scientific">Staphylococcus epidermidis (strain ATCC 12228 / FDA PCI 1200)</name>
    <dbReference type="NCBI Taxonomy" id="176280"/>
    <lineage>
        <taxon>Bacteria</taxon>
        <taxon>Bacillati</taxon>
        <taxon>Bacillota</taxon>
        <taxon>Bacilli</taxon>
        <taxon>Bacillales</taxon>
        <taxon>Staphylococcaceae</taxon>
        <taxon>Staphylococcus</taxon>
    </lineage>
</organism>
<feature type="chain" id="PRO_0000110185" description="Fluoride-specific ion channel FluC 1">
    <location>
        <begin position="1"/>
        <end position="121"/>
    </location>
</feature>
<feature type="transmembrane region" description="Helical" evidence="1">
    <location>
        <begin position="3"/>
        <end position="23"/>
    </location>
</feature>
<feature type="transmembrane region" description="Helical" evidence="1">
    <location>
        <begin position="29"/>
        <end position="49"/>
    </location>
</feature>
<feature type="transmembrane region" description="Helical" evidence="1">
    <location>
        <begin position="67"/>
        <end position="87"/>
    </location>
</feature>
<feature type="transmembrane region" description="Helical" evidence="1">
    <location>
        <begin position="92"/>
        <end position="112"/>
    </location>
</feature>
<feature type="binding site" evidence="1">
    <location>
        <position position="71"/>
    </location>
    <ligand>
        <name>Na(+)</name>
        <dbReference type="ChEBI" id="CHEBI:29101"/>
        <note>structural</note>
    </ligand>
</feature>
<feature type="binding site" evidence="1">
    <location>
        <position position="74"/>
    </location>
    <ligand>
        <name>Na(+)</name>
        <dbReference type="ChEBI" id="CHEBI:29101"/>
        <note>structural</note>
    </ligand>
</feature>
<evidence type="ECO:0000255" key="1">
    <source>
        <dbReference type="HAMAP-Rule" id="MF_00454"/>
    </source>
</evidence>
<comment type="function">
    <text evidence="1">Fluoride-specific ion channel. Important for reducing fluoride concentration in the cell, thus reducing its toxicity.</text>
</comment>
<comment type="catalytic activity">
    <reaction evidence="1">
        <text>fluoride(in) = fluoride(out)</text>
        <dbReference type="Rhea" id="RHEA:76159"/>
        <dbReference type="ChEBI" id="CHEBI:17051"/>
    </reaction>
    <physiologicalReaction direction="left-to-right" evidence="1">
        <dbReference type="Rhea" id="RHEA:76160"/>
    </physiologicalReaction>
</comment>
<comment type="activity regulation">
    <text evidence="1">Na(+) is not transported, but it plays an essential structural role and its presence is essential for fluoride channel function.</text>
</comment>
<comment type="subcellular location">
    <subcellularLocation>
        <location evidence="1">Cell membrane</location>
        <topology evidence="1">Multi-pass membrane protein</topology>
    </subcellularLocation>
</comment>
<comment type="similarity">
    <text evidence="1">Belongs to the fluoride channel Fluc/FEX (TC 1.A.43) family.</text>
</comment>
<reference key="1">
    <citation type="journal article" date="2003" name="Mol. Microbiol.">
        <title>Genome-based analysis of virulence genes in a non-biofilm-forming Staphylococcus epidermidis strain (ATCC 12228).</title>
        <authorList>
            <person name="Zhang Y.-Q."/>
            <person name="Ren S.-X."/>
            <person name="Li H.-L."/>
            <person name="Wang Y.-X."/>
            <person name="Fu G."/>
            <person name="Yang J."/>
            <person name="Qin Z.-Q."/>
            <person name="Miao Y.-G."/>
            <person name="Wang W.-Y."/>
            <person name="Chen R.-S."/>
            <person name="Shen Y."/>
            <person name="Chen Z."/>
            <person name="Yuan Z.-H."/>
            <person name="Zhao G.-P."/>
            <person name="Qu D."/>
            <person name="Danchin A."/>
            <person name="Wen Y.-M."/>
        </authorList>
    </citation>
    <scope>NUCLEOTIDE SEQUENCE [LARGE SCALE GENOMIC DNA]</scope>
    <source>
        <strain>ATCC 12228 / FDA PCI 1200</strain>
    </source>
</reference>
<proteinExistence type="inferred from homology"/>
<keyword id="KW-1003">Cell membrane</keyword>
<keyword id="KW-0407">Ion channel</keyword>
<keyword id="KW-0406">Ion transport</keyword>
<keyword id="KW-0472">Membrane</keyword>
<keyword id="KW-0479">Metal-binding</keyword>
<keyword id="KW-0915">Sodium</keyword>
<keyword id="KW-0812">Transmembrane</keyword>
<keyword id="KW-1133">Transmembrane helix</keyword>
<keyword id="KW-0813">Transport</keyword>
<name>FLUC1_STAES</name>
<protein>
    <recommendedName>
        <fullName evidence="1">Fluoride-specific ion channel FluC 1</fullName>
    </recommendedName>
</protein>
<gene>
    <name evidence="1" type="primary">fluC1</name>
    <name evidence="1" type="synonym">crcB1</name>
    <name type="ordered locus">SE_1451</name>
</gene>
<sequence length="121" mass="13082">MQYLYIFVGGALGALIRFCLSMLNEGSTIPLGTFVANLLGAFLMGSIGALSLSLFKTHPNIKKGLTTGLLGALTTFSTFQFELVTLFNQHHFILFTIYGVTSYILGILSCYLGVKIGGRFS</sequence>